<organism>
    <name type="scientific">Alcanivorax borkumensis (strain ATCC 700651 / DSM 11573 / NCIMB 13689 / SK2)</name>
    <dbReference type="NCBI Taxonomy" id="393595"/>
    <lineage>
        <taxon>Bacteria</taxon>
        <taxon>Pseudomonadati</taxon>
        <taxon>Pseudomonadota</taxon>
        <taxon>Gammaproteobacteria</taxon>
        <taxon>Oceanospirillales</taxon>
        <taxon>Alcanivoracaceae</taxon>
        <taxon>Alcanivorax</taxon>
    </lineage>
</organism>
<comment type="function">
    <text evidence="1">DNA-dependent RNA polymerase catalyzes the transcription of DNA into RNA using the four ribonucleoside triphosphates as substrates.</text>
</comment>
<comment type="catalytic activity">
    <reaction evidence="1">
        <text>RNA(n) + a ribonucleoside 5'-triphosphate = RNA(n+1) + diphosphate</text>
        <dbReference type="Rhea" id="RHEA:21248"/>
        <dbReference type="Rhea" id="RHEA-COMP:14527"/>
        <dbReference type="Rhea" id="RHEA-COMP:17342"/>
        <dbReference type="ChEBI" id="CHEBI:33019"/>
        <dbReference type="ChEBI" id="CHEBI:61557"/>
        <dbReference type="ChEBI" id="CHEBI:140395"/>
        <dbReference type="EC" id="2.7.7.6"/>
    </reaction>
</comment>
<comment type="cofactor">
    <cofactor evidence="1">
        <name>Mg(2+)</name>
        <dbReference type="ChEBI" id="CHEBI:18420"/>
    </cofactor>
    <text evidence="1">Binds 1 Mg(2+) ion per subunit.</text>
</comment>
<comment type="cofactor">
    <cofactor evidence="1">
        <name>Zn(2+)</name>
        <dbReference type="ChEBI" id="CHEBI:29105"/>
    </cofactor>
    <text evidence="1">Binds 2 Zn(2+) ions per subunit.</text>
</comment>
<comment type="subunit">
    <text evidence="1">The RNAP catalytic core consists of 2 alpha, 1 beta, 1 beta' and 1 omega subunit. When a sigma factor is associated with the core the holoenzyme is formed, which can initiate transcription.</text>
</comment>
<comment type="similarity">
    <text evidence="1">Belongs to the RNA polymerase beta' chain family.</text>
</comment>
<gene>
    <name evidence="1" type="primary">rpoC</name>
    <name type="ordered locus">ABO_0379</name>
</gene>
<reference key="1">
    <citation type="journal article" date="2006" name="Nat. Biotechnol.">
        <title>Genome sequence of the ubiquitous hydrocarbon-degrading marine bacterium Alcanivorax borkumensis.</title>
        <authorList>
            <person name="Schneiker S."/>
            <person name="Martins dos Santos V.A.P."/>
            <person name="Bartels D."/>
            <person name="Bekel T."/>
            <person name="Brecht M."/>
            <person name="Buhrmester J."/>
            <person name="Chernikova T.N."/>
            <person name="Denaro R."/>
            <person name="Ferrer M."/>
            <person name="Gertler C."/>
            <person name="Goesmann A."/>
            <person name="Golyshina O.V."/>
            <person name="Kaminski F."/>
            <person name="Khachane A.N."/>
            <person name="Lang S."/>
            <person name="Linke B."/>
            <person name="McHardy A.C."/>
            <person name="Meyer F."/>
            <person name="Nechitaylo T."/>
            <person name="Puehler A."/>
            <person name="Regenhardt D."/>
            <person name="Rupp O."/>
            <person name="Sabirova J.S."/>
            <person name="Selbitschka W."/>
            <person name="Yakimov M.M."/>
            <person name="Timmis K.N."/>
            <person name="Vorhoelter F.-J."/>
            <person name="Weidner S."/>
            <person name="Kaiser O."/>
            <person name="Golyshin P.N."/>
        </authorList>
    </citation>
    <scope>NUCLEOTIDE SEQUENCE [LARGE SCALE GENOMIC DNA]</scope>
    <source>
        <strain>ATCC 700651 / DSM 11573 / NCIMB 13689 / SK2</strain>
    </source>
</reference>
<feature type="chain" id="PRO_0000308817" description="DNA-directed RNA polymerase subunit beta'">
    <location>
        <begin position="1"/>
        <end position="1400"/>
    </location>
</feature>
<feature type="binding site" evidence="1">
    <location>
        <position position="70"/>
    </location>
    <ligand>
        <name>Zn(2+)</name>
        <dbReference type="ChEBI" id="CHEBI:29105"/>
        <label>1</label>
    </ligand>
</feature>
<feature type="binding site" evidence="1">
    <location>
        <position position="72"/>
    </location>
    <ligand>
        <name>Zn(2+)</name>
        <dbReference type="ChEBI" id="CHEBI:29105"/>
        <label>1</label>
    </ligand>
</feature>
<feature type="binding site" evidence="1">
    <location>
        <position position="85"/>
    </location>
    <ligand>
        <name>Zn(2+)</name>
        <dbReference type="ChEBI" id="CHEBI:29105"/>
        <label>1</label>
    </ligand>
</feature>
<feature type="binding site" evidence="1">
    <location>
        <position position="88"/>
    </location>
    <ligand>
        <name>Zn(2+)</name>
        <dbReference type="ChEBI" id="CHEBI:29105"/>
        <label>1</label>
    </ligand>
</feature>
<feature type="binding site" evidence="1">
    <location>
        <position position="460"/>
    </location>
    <ligand>
        <name>Mg(2+)</name>
        <dbReference type="ChEBI" id="CHEBI:18420"/>
    </ligand>
</feature>
<feature type="binding site" evidence="1">
    <location>
        <position position="462"/>
    </location>
    <ligand>
        <name>Mg(2+)</name>
        <dbReference type="ChEBI" id="CHEBI:18420"/>
    </ligand>
</feature>
<feature type="binding site" evidence="1">
    <location>
        <position position="464"/>
    </location>
    <ligand>
        <name>Mg(2+)</name>
        <dbReference type="ChEBI" id="CHEBI:18420"/>
    </ligand>
</feature>
<feature type="binding site" evidence="1">
    <location>
        <position position="814"/>
    </location>
    <ligand>
        <name>Zn(2+)</name>
        <dbReference type="ChEBI" id="CHEBI:29105"/>
        <label>2</label>
    </ligand>
</feature>
<feature type="binding site" evidence="1">
    <location>
        <position position="889"/>
    </location>
    <ligand>
        <name>Zn(2+)</name>
        <dbReference type="ChEBI" id="CHEBI:29105"/>
        <label>2</label>
    </ligand>
</feature>
<feature type="binding site" evidence="1">
    <location>
        <position position="896"/>
    </location>
    <ligand>
        <name>Zn(2+)</name>
        <dbReference type="ChEBI" id="CHEBI:29105"/>
        <label>2</label>
    </ligand>
</feature>
<feature type="binding site" evidence="1">
    <location>
        <position position="899"/>
    </location>
    <ligand>
        <name>Zn(2+)</name>
        <dbReference type="ChEBI" id="CHEBI:29105"/>
        <label>2</label>
    </ligand>
</feature>
<dbReference type="EC" id="2.7.7.6" evidence="1"/>
<dbReference type="EMBL" id="AM286690">
    <property type="protein sequence ID" value="CAL15827.1"/>
    <property type="molecule type" value="Genomic_DNA"/>
</dbReference>
<dbReference type="RefSeq" id="WP_011587674.1">
    <property type="nucleotide sequence ID" value="NC_008260.1"/>
</dbReference>
<dbReference type="SMR" id="Q0VSM1"/>
<dbReference type="STRING" id="393595.ABO_0379"/>
<dbReference type="KEGG" id="abo:ABO_0379"/>
<dbReference type="eggNOG" id="COG0086">
    <property type="taxonomic scope" value="Bacteria"/>
</dbReference>
<dbReference type="HOGENOM" id="CLU_000524_3_1_6"/>
<dbReference type="OrthoDB" id="9815296at2"/>
<dbReference type="Proteomes" id="UP000008871">
    <property type="component" value="Chromosome"/>
</dbReference>
<dbReference type="GO" id="GO:0000428">
    <property type="term" value="C:DNA-directed RNA polymerase complex"/>
    <property type="evidence" value="ECO:0007669"/>
    <property type="project" value="UniProtKB-KW"/>
</dbReference>
<dbReference type="GO" id="GO:0003677">
    <property type="term" value="F:DNA binding"/>
    <property type="evidence" value="ECO:0007669"/>
    <property type="project" value="UniProtKB-UniRule"/>
</dbReference>
<dbReference type="GO" id="GO:0003899">
    <property type="term" value="F:DNA-directed RNA polymerase activity"/>
    <property type="evidence" value="ECO:0007669"/>
    <property type="project" value="UniProtKB-UniRule"/>
</dbReference>
<dbReference type="GO" id="GO:0000287">
    <property type="term" value="F:magnesium ion binding"/>
    <property type="evidence" value="ECO:0007669"/>
    <property type="project" value="UniProtKB-UniRule"/>
</dbReference>
<dbReference type="GO" id="GO:0008270">
    <property type="term" value="F:zinc ion binding"/>
    <property type="evidence" value="ECO:0007669"/>
    <property type="project" value="UniProtKB-UniRule"/>
</dbReference>
<dbReference type="GO" id="GO:0006351">
    <property type="term" value="P:DNA-templated transcription"/>
    <property type="evidence" value="ECO:0007669"/>
    <property type="project" value="UniProtKB-UniRule"/>
</dbReference>
<dbReference type="CDD" id="cd02655">
    <property type="entry name" value="RNAP_beta'_C"/>
    <property type="match status" value="1"/>
</dbReference>
<dbReference type="CDD" id="cd01609">
    <property type="entry name" value="RNAP_beta'_N"/>
    <property type="match status" value="1"/>
</dbReference>
<dbReference type="FunFam" id="1.10.132.30:FF:000003">
    <property type="entry name" value="DNA-directed RNA polymerase subunit beta"/>
    <property type="match status" value="1"/>
</dbReference>
<dbReference type="FunFam" id="1.10.150.390:FF:000002">
    <property type="entry name" value="DNA-directed RNA polymerase subunit beta"/>
    <property type="match status" value="1"/>
</dbReference>
<dbReference type="FunFam" id="1.10.40.90:FF:000001">
    <property type="entry name" value="DNA-directed RNA polymerase subunit beta"/>
    <property type="match status" value="1"/>
</dbReference>
<dbReference type="FunFam" id="4.10.860.120:FF:000001">
    <property type="entry name" value="DNA-directed RNA polymerase subunit beta"/>
    <property type="match status" value="1"/>
</dbReference>
<dbReference type="Gene3D" id="1.10.132.30">
    <property type="match status" value="1"/>
</dbReference>
<dbReference type="Gene3D" id="1.10.150.390">
    <property type="match status" value="1"/>
</dbReference>
<dbReference type="Gene3D" id="1.10.1790.20">
    <property type="match status" value="1"/>
</dbReference>
<dbReference type="Gene3D" id="1.10.40.90">
    <property type="match status" value="1"/>
</dbReference>
<dbReference type="Gene3D" id="2.40.40.20">
    <property type="match status" value="1"/>
</dbReference>
<dbReference type="Gene3D" id="2.40.50.100">
    <property type="match status" value="3"/>
</dbReference>
<dbReference type="Gene3D" id="4.10.860.120">
    <property type="entry name" value="RNA polymerase II, clamp domain"/>
    <property type="match status" value="1"/>
</dbReference>
<dbReference type="Gene3D" id="1.10.274.100">
    <property type="entry name" value="RNA polymerase Rpb1, domain 3"/>
    <property type="match status" value="1"/>
</dbReference>
<dbReference type="HAMAP" id="MF_01322">
    <property type="entry name" value="RNApol_bact_RpoC"/>
    <property type="match status" value="1"/>
</dbReference>
<dbReference type="InterPro" id="IPR045867">
    <property type="entry name" value="DNA-dir_RpoC_beta_prime"/>
</dbReference>
<dbReference type="InterPro" id="IPR012754">
    <property type="entry name" value="DNA-dir_RpoC_beta_prime_bact"/>
</dbReference>
<dbReference type="InterPro" id="IPR000722">
    <property type="entry name" value="RNA_pol_asu"/>
</dbReference>
<dbReference type="InterPro" id="IPR006592">
    <property type="entry name" value="RNA_pol_N"/>
</dbReference>
<dbReference type="InterPro" id="IPR007080">
    <property type="entry name" value="RNA_pol_Rpb1_1"/>
</dbReference>
<dbReference type="InterPro" id="IPR007066">
    <property type="entry name" value="RNA_pol_Rpb1_3"/>
</dbReference>
<dbReference type="InterPro" id="IPR042102">
    <property type="entry name" value="RNA_pol_Rpb1_3_sf"/>
</dbReference>
<dbReference type="InterPro" id="IPR007083">
    <property type="entry name" value="RNA_pol_Rpb1_4"/>
</dbReference>
<dbReference type="InterPro" id="IPR007081">
    <property type="entry name" value="RNA_pol_Rpb1_5"/>
</dbReference>
<dbReference type="InterPro" id="IPR044893">
    <property type="entry name" value="RNA_pol_Rpb1_clamp_domain"/>
</dbReference>
<dbReference type="InterPro" id="IPR038120">
    <property type="entry name" value="Rpb1_funnel_sf"/>
</dbReference>
<dbReference type="NCBIfam" id="TIGR02386">
    <property type="entry name" value="rpoC_TIGR"/>
    <property type="match status" value="1"/>
</dbReference>
<dbReference type="PANTHER" id="PTHR19376">
    <property type="entry name" value="DNA-DIRECTED RNA POLYMERASE"/>
    <property type="match status" value="1"/>
</dbReference>
<dbReference type="PANTHER" id="PTHR19376:SF54">
    <property type="entry name" value="DNA-DIRECTED RNA POLYMERASE SUBUNIT BETA"/>
    <property type="match status" value="1"/>
</dbReference>
<dbReference type="Pfam" id="PF04997">
    <property type="entry name" value="RNA_pol_Rpb1_1"/>
    <property type="match status" value="1"/>
</dbReference>
<dbReference type="Pfam" id="PF00623">
    <property type="entry name" value="RNA_pol_Rpb1_2"/>
    <property type="match status" value="2"/>
</dbReference>
<dbReference type="Pfam" id="PF04983">
    <property type="entry name" value="RNA_pol_Rpb1_3"/>
    <property type="match status" value="1"/>
</dbReference>
<dbReference type="Pfam" id="PF05000">
    <property type="entry name" value="RNA_pol_Rpb1_4"/>
    <property type="match status" value="1"/>
</dbReference>
<dbReference type="Pfam" id="PF04998">
    <property type="entry name" value="RNA_pol_Rpb1_5"/>
    <property type="match status" value="1"/>
</dbReference>
<dbReference type="SMART" id="SM00663">
    <property type="entry name" value="RPOLA_N"/>
    <property type="match status" value="1"/>
</dbReference>
<dbReference type="SUPFAM" id="SSF64484">
    <property type="entry name" value="beta and beta-prime subunits of DNA dependent RNA-polymerase"/>
    <property type="match status" value="1"/>
</dbReference>
<name>RPOC_ALCBS</name>
<evidence type="ECO:0000255" key="1">
    <source>
        <dbReference type="HAMAP-Rule" id="MF_01322"/>
    </source>
</evidence>
<protein>
    <recommendedName>
        <fullName evidence="1">DNA-directed RNA polymerase subunit beta'</fullName>
        <shortName evidence="1">RNAP subunit beta'</shortName>
        <ecNumber evidence="1">2.7.7.6</ecNumber>
    </recommendedName>
    <alternativeName>
        <fullName evidence="1">RNA polymerase subunit beta'</fullName>
    </alternativeName>
    <alternativeName>
        <fullName evidence="1">Transcriptase subunit beta'</fullName>
    </alternativeName>
</protein>
<proteinExistence type="inferred from homology"/>
<accession>Q0VSM1</accession>
<keyword id="KW-0240">DNA-directed RNA polymerase</keyword>
<keyword id="KW-0460">Magnesium</keyword>
<keyword id="KW-0479">Metal-binding</keyword>
<keyword id="KW-0548">Nucleotidyltransferase</keyword>
<keyword id="KW-1185">Reference proteome</keyword>
<keyword id="KW-0804">Transcription</keyword>
<keyword id="KW-0808">Transferase</keyword>
<keyword id="KW-0862">Zinc</keyword>
<sequence length="1400" mass="155525">MKDLLNLLKSQGQVTEFDKIRIALAPPDLIRSWSFGEVKKPETINYRTFKPERDGLFCARIFGPIKDYECLCGKYKRLKHRGVICEKCGVEVTLSKVRRERMGHIELASPTAHIWFLKSLPSRIGLMLDMTLRDIERVLYFESFVVTEPGMTTLERGQLLTDEEYFDAMEEFGDEFEAKMGAEAVQQLLMELDLVEEIKILREEVESTNSDTKLKKLSKRLKLMEAFKDSGNAPEWMVLTVLPVLPPDLRPLVPLDGGRFATSDLNDLYRRVINRNNRLKRLLDLSAPDIIVRNEKRMLQESVDALLDNGRRGRAITGSNKRPLKSLADMIKGKQGRFRQNLLGKRVDYSGRSVIVVGPTLKLHECGLPKKMALELFKPFIFAKLEGRGLATTIKAAKKMVERETAEVWDILAEVIREHPVMLNRAPTLHRLGIQAFEPVLIEGKAIQLHPLVCAAFNADFDGDQMAVHVPLTLEAQLEARALMMSTNNILSPANGEPIIGPTQDVVLGLYYISRDRVNAQGEGHVFADTKEVMRALGNKQVHIHARVKVRVHEVVKDLEGNVEERTFIADTTPGRCKLWDIVPAGLGFDMVNQNMTKKAISKLLNTCYRILGTKETCIFADQLMYLGFREATLSGSSIGVEDMVIPDAKYTMIDAAEEEVREIEEQFASGLVTRGERYNKVVDIWARTNDQIAKAMMENLRVEVVKNRDGKDEEQGSFNSIFMMADSGARGSAAQIRQLAGMRGLMAKPDGSIIETPITSNFREGLNVLQYFISTHGARKGLADTALKTANSGYLTRRLVDVAQDLVVNHIDCGTEEGLLMTPLIEGGDVVEPLRERVLGRVVARDVMNPLNQDEVAVEAGTLLDEVWVAQLETMGVDEVLVRSPITCATRWGVCATCYGRDLARGHQVNVGEAVGVIAAQSIGEPGTQLTMRTFHIGGAASRASAVSSIQIKHGGKVRFHNAKHVQHKDGLVIVSRSADLAVADELGRERERYKLPYGATVTVNEGDEVSGGQVVATWDPHTHPIIAEVEGKVQFGDMEEGITVNHQTDELTGLTNIEMLSSQNRPSAGKDMRPVIRVLDSKGKPIVMPNTDMPAQYFLPGGALCGLKDGANIGVGDVIARIPQESSKTRDITGGLPRVADLFEARNPKEAAILAEKTGTVSFGKETKGKVRLVITPDNSDDNYEELIPKWRQLNVFEGERVEKGEVVSDGPLNPHDILRLKGESELARYIVNEVQEVYRLQGVKINDKHIETIIRQMLRKVEILEVGESHFIKGEQAEYARVMEEIDRLKAEDKMLPQYQRLLLGITKASLATESFISAASFQETTRVLTEAAVTGKEDDLRGLKENVVVGRLIPAGTGYAYHMERRRQRADARGPEAPTMDEVEAALSEALSSSGE</sequence>